<keyword id="KW-0963">Cytoplasm</keyword>
<keyword id="KW-0238">DNA-binding</keyword>
<keyword id="KW-0520">NAD</keyword>
<keyword id="KW-0678">Repressor</keyword>
<keyword id="KW-0804">Transcription</keyword>
<keyword id="KW-0805">Transcription regulation</keyword>
<gene>
    <name evidence="1" type="primary">rex</name>
    <name type="ordered locus">SA1851</name>
</gene>
<organism>
    <name type="scientific">Staphylococcus aureus (strain N315)</name>
    <dbReference type="NCBI Taxonomy" id="158879"/>
    <lineage>
        <taxon>Bacteria</taxon>
        <taxon>Bacillati</taxon>
        <taxon>Bacillota</taxon>
        <taxon>Bacilli</taxon>
        <taxon>Bacillales</taxon>
        <taxon>Staphylococcaceae</taxon>
        <taxon>Staphylococcus</taxon>
    </lineage>
</organism>
<comment type="function">
    <text evidence="1">Modulates transcription in response to changes in cellular NADH/NAD(+) redox state.</text>
</comment>
<comment type="subunit">
    <text evidence="1">Homodimer.</text>
</comment>
<comment type="subcellular location">
    <subcellularLocation>
        <location evidence="1">Cytoplasm</location>
    </subcellularLocation>
</comment>
<comment type="similarity">
    <text evidence="1">Belongs to the transcriptional regulatory Rex family.</text>
</comment>
<reference key="1">
    <citation type="journal article" date="2001" name="Lancet">
        <title>Whole genome sequencing of meticillin-resistant Staphylococcus aureus.</title>
        <authorList>
            <person name="Kuroda M."/>
            <person name="Ohta T."/>
            <person name="Uchiyama I."/>
            <person name="Baba T."/>
            <person name="Yuzawa H."/>
            <person name="Kobayashi I."/>
            <person name="Cui L."/>
            <person name="Oguchi A."/>
            <person name="Aoki K."/>
            <person name="Nagai Y."/>
            <person name="Lian J.-Q."/>
            <person name="Ito T."/>
            <person name="Kanamori M."/>
            <person name="Matsumaru H."/>
            <person name="Maruyama A."/>
            <person name="Murakami H."/>
            <person name="Hosoyama A."/>
            <person name="Mizutani-Ui Y."/>
            <person name="Takahashi N.K."/>
            <person name="Sawano T."/>
            <person name="Inoue R."/>
            <person name="Kaito C."/>
            <person name="Sekimizu K."/>
            <person name="Hirakawa H."/>
            <person name="Kuhara S."/>
            <person name="Goto S."/>
            <person name="Yabuzaki J."/>
            <person name="Kanehisa M."/>
            <person name="Yamashita A."/>
            <person name="Oshima K."/>
            <person name="Furuya K."/>
            <person name="Yoshino C."/>
            <person name="Shiba T."/>
            <person name="Hattori M."/>
            <person name="Ogasawara N."/>
            <person name="Hayashi H."/>
            <person name="Hiramatsu K."/>
        </authorList>
    </citation>
    <scope>NUCLEOTIDE SEQUENCE [LARGE SCALE GENOMIC DNA]</scope>
    <source>
        <strain>N315</strain>
    </source>
</reference>
<accession>P60386</accession>
<accession>Q99SK6</accession>
<protein>
    <recommendedName>
        <fullName evidence="1">Redox-sensing transcriptional repressor Rex</fullName>
    </recommendedName>
</protein>
<evidence type="ECO:0000255" key="1">
    <source>
        <dbReference type="HAMAP-Rule" id="MF_01131"/>
    </source>
</evidence>
<sequence length="211" mass="23599">MSDQVKIPRATLKRLPLYYRFVSSLKSKGIDRVNSKAISDALQIDSATIRRDFSYFGELGKKGYGYNIDSLLDFFKSELSESDMIKIAIVGVGNLGKALLTYNFSIHDDMTITEAFDVKEDVIGQKIGNVIVKDNDELITTLKKEEIDVVILTTPERVAQKVADELVQAGVKGILNFTPGRINTPSDVQVHQIDLGIELQSLLFFMKNYSE</sequence>
<dbReference type="EMBL" id="BA000018">
    <property type="protein sequence ID" value="BAB43133.1"/>
    <property type="molecule type" value="Genomic_DNA"/>
</dbReference>
<dbReference type="PIR" id="D89996">
    <property type="entry name" value="D89996"/>
</dbReference>
<dbReference type="RefSeq" id="WP_001283612.1">
    <property type="nucleotide sequence ID" value="NC_002745.2"/>
</dbReference>
<dbReference type="SMR" id="P60386"/>
<dbReference type="EnsemblBacteria" id="BAB43133">
    <property type="protein sequence ID" value="BAB43133"/>
    <property type="gene ID" value="BAB43133"/>
</dbReference>
<dbReference type="KEGG" id="sau:SA1851"/>
<dbReference type="HOGENOM" id="CLU_061534_1_1_9"/>
<dbReference type="GO" id="GO:0005737">
    <property type="term" value="C:cytoplasm"/>
    <property type="evidence" value="ECO:0007669"/>
    <property type="project" value="UniProtKB-SubCell"/>
</dbReference>
<dbReference type="GO" id="GO:0003677">
    <property type="term" value="F:DNA binding"/>
    <property type="evidence" value="ECO:0007669"/>
    <property type="project" value="UniProtKB-UniRule"/>
</dbReference>
<dbReference type="GO" id="GO:0003700">
    <property type="term" value="F:DNA-binding transcription factor activity"/>
    <property type="evidence" value="ECO:0007669"/>
    <property type="project" value="UniProtKB-UniRule"/>
</dbReference>
<dbReference type="GO" id="GO:0045892">
    <property type="term" value="P:negative regulation of DNA-templated transcription"/>
    <property type="evidence" value="ECO:0007669"/>
    <property type="project" value="InterPro"/>
</dbReference>
<dbReference type="GO" id="GO:0051775">
    <property type="term" value="P:response to redox state"/>
    <property type="evidence" value="ECO:0007669"/>
    <property type="project" value="InterPro"/>
</dbReference>
<dbReference type="Gene3D" id="3.40.50.720">
    <property type="entry name" value="NAD(P)-binding Rossmann-like Domain"/>
    <property type="match status" value="1"/>
</dbReference>
<dbReference type="Gene3D" id="1.10.10.10">
    <property type="entry name" value="Winged helix-like DNA-binding domain superfamily/Winged helix DNA-binding domain"/>
    <property type="match status" value="1"/>
</dbReference>
<dbReference type="HAMAP" id="MF_01131">
    <property type="entry name" value="Rex"/>
    <property type="match status" value="1"/>
</dbReference>
<dbReference type="InterPro" id="IPR003781">
    <property type="entry name" value="CoA-bd"/>
</dbReference>
<dbReference type="InterPro" id="IPR036291">
    <property type="entry name" value="NAD(P)-bd_dom_sf"/>
</dbReference>
<dbReference type="InterPro" id="IPR009718">
    <property type="entry name" value="Rex_DNA-bd_C_dom"/>
</dbReference>
<dbReference type="InterPro" id="IPR022876">
    <property type="entry name" value="Tscrpt_rep_Rex"/>
</dbReference>
<dbReference type="InterPro" id="IPR036388">
    <property type="entry name" value="WH-like_DNA-bd_sf"/>
</dbReference>
<dbReference type="InterPro" id="IPR036390">
    <property type="entry name" value="WH_DNA-bd_sf"/>
</dbReference>
<dbReference type="NCBIfam" id="NF003989">
    <property type="entry name" value="PRK05472.1-3"/>
    <property type="match status" value="1"/>
</dbReference>
<dbReference type="NCBIfam" id="NF003991">
    <property type="entry name" value="PRK05472.1-5"/>
    <property type="match status" value="1"/>
</dbReference>
<dbReference type="NCBIfam" id="NF003994">
    <property type="entry name" value="PRK05472.2-3"/>
    <property type="match status" value="1"/>
</dbReference>
<dbReference type="NCBIfam" id="NF003995">
    <property type="entry name" value="PRK05472.2-4"/>
    <property type="match status" value="1"/>
</dbReference>
<dbReference type="NCBIfam" id="NF003996">
    <property type="entry name" value="PRK05472.2-5"/>
    <property type="match status" value="1"/>
</dbReference>
<dbReference type="PANTHER" id="PTHR35786">
    <property type="entry name" value="REDOX-SENSING TRANSCRIPTIONAL REPRESSOR REX"/>
    <property type="match status" value="1"/>
</dbReference>
<dbReference type="PANTHER" id="PTHR35786:SF1">
    <property type="entry name" value="REDOX-SENSING TRANSCRIPTIONAL REPRESSOR REX 1"/>
    <property type="match status" value="1"/>
</dbReference>
<dbReference type="Pfam" id="PF02629">
    <property type="entry name" value="CoA_binding"/>
    <property type="match status" value="1"/>
</dbReference>
<dbReference type="Pfam" id="PF06971">
    <property type="entry name" value="Put_DNA-bind_N"/>
    <property type="match status" value="1"/>
</dbReference>
<dbReference type="SMART" id="SM00881">
    <property type="entry name" value="CoA_binding"/>
    <property type="match status" value="1"/>
</dbReference>
<dbReference type="SUPFAM" id="SSF51735">
    <property type="entry name" value="NAD(P)-binding Rossmann-fold domains"/>
    <property type="match status" value="1"/>
</dbReference>
<dbReference type="SUPFAM" id="SSF46785">
    <property type="entry name" value="Winged helix' DNA-binding domain"/>
    <property type="match status" value="1"/>
</dbReference>
<proteinExistence type="inferred from homology"/>
<name>REX_STAAN</name>
<feature type="chain" id="PRO_0000097905" description="Redox-sensing transcriptional repressor Rex">
    <location>
        <begin position="1"/>
        <end position="211"/>
    </location>
</feature>
<feature type="DNA-binding region" description="H-T-H motif" evidence="1">
    <location>
        <begin position="17"/>
        <end position="56"/>
    </location>
</feature>
<feature type="binding site" evidence="1">
    <location>
        <begin position="91"/>
        <end position="96"/>
    </location>
    <ligand>
        <name>NAD(+)</name>
        <dbReference type="ChEBI" id="CHEBI:57540"/>
    </ligand>
</feature>